<reference key="1">
    <citation type="journal article" date="2008" name="Nature">
        <title>Comparative genomics of the neglected human malaria parasite Plasmodium vivax.</title>
        <authorList>
            <person name="Carlton J.M."/>
            <person name="Adams J.H."/>
            <person name="Silva J.C."/>
            <person name="Bidwell S.L."/>
            <person name="Lorenzi H."/>
            <person name="Caler E."/>
            <person name="Crabtree J."/>
            <person name="Angiuoli S.V."/>
            <person name="Merino E.F."/>
            <person name="Amedeo P."/>
            <person name="Cheng Q."/>
            <person name="Coulson R.M.R."/>
            <person name="Crabb B.S."/>
            <person name="del Portillo H.A."/>
            <person name="Essien K."/>
            <person name="Feldblyum T.V."/>
            <person name="Fernandez-Becerra C."/>
            <person name="Gilson P.R."/>
            <person name="Gueye A.H."/>
            <person name="Guo X."/>
            <person name="Kang'a S."/>
            <person name="Kooij T.W.A."/>
            <person name="Korsinczky M."/>
            <person name="Meyer E.V.-S."/>
            <person name="Nene V."/>
            <person name="Paulsen I."/>
            <person name="White O."/>
            <person name="Ralph S.A."/>
            <person name="Ren Q."/>
            <person name="Sargeant T.J."/>
            <person name="Salzberg S.L."/>
            <person name="Stoeckert C.J."/>
            <person name="Sullivan S.A."/>
            <person name="Yamamoto M.M."/>
            <person name="Hoffman S.L."/>
            <person name="Wortman J.R."/>
            <person name="Gardner M.J."/>
            <person name="Galinski M.R."/>
            <person name="Barnwell J.W."/>
            <person name="Fraser-Liggett C.M."/>
        </authorList>
    </citation>
    <scope>NUCLEOTIDE SEQUENCE [LARGE SCALE GENOMIC DNA]</scope>
    <source>
        <strain>Salvador I</strain>
    </source>
</reference>
<proteinExistence type="inferred from homology"/>
<sequence length="263" mass="29818">MSSKKVQSPKEESIAKMLICKVHIGTKNLENKMKRYVYTRAKDGVHILNLAKTYEKLQLAARIIVAINNPADVVVVSARPFGSRAVLKFAQYTGAQAIAGRWTPGMLTNQIIQKFTEPRLLIVTDPRTDAQPVKESAYANIPVIALCDSDSPLEHVDIAIPCNNKGKESIALMYWLLAQEVLYLKGTLPRSKPWKVMVDMFLWRDPEQFELKNLAIEETAPAAPHLAENQFATEAPYEEWNKKEEWNDNANEEWKNPIAADEW</sequence>
<evidence type="ECO:0000255" key="1">
    <source>
        <dbReference type="HAMAP-Rule" id="MF_03015"/>
    </source>
</evidence>
<evidence type="ECO:0000305" key="2"/>
<dbReference type="EMBL" id="AAKM01002769">
    <property type="protein sequence ID" value="EDL42477.1"/>
    <property type="molecule type" value="Genomic_DNA"/>
</dbReference>
<dbReference type="RefSeq" id="XP_001608501.1">
    <property type="nucleotide sequence ID" value="XM_001608451.1"/>
</dbReference>
<dbReference type="SMR" id="A5KE24"/>
<dbReference type="STRING" id="126793.A5KE24"/>
<dbReference type="EnsemblProtists" id="EDL42477">
    <property type="protein sequence ID" value="EDL42477"/>
    <property type="gene ID" value="PVX_111380"/>
</dbReference>
<dbReference type="GeneID" id="5471372"/>
<dbReference type="KEGG" id="pvx:PVX_111380"/>
<dbReference type="VEuPathDB" id="PlasmoDB:PVX_111380"/>
<dbReference type="InParanoid" id="A5KE24"/>
<dbReference type="OMA" id="VKNFFEP"/>
<dbReference type="PhylomeDB" id="A5KE24"/>
<dbReference type="Proteomes" id="UP000008333">
    <property type="component" value="Chromosome 6"/>
</dbReference>
<dbReference type="GO" id="GO:0022627">
    <property type="term" value="C:cytosolic small ribosomal subunit"/>
    <property type="evidence" value="ECO:0007669"/>
    <property type="project" value="UniProtKB-UniRule"/>
</dbReference>
<dbReference type="GO" id="GO:0003735">
    <property type="term" value="F:structural constituent of ribosome"/>
    <property type="evidence" value="ECO:0007669"/>
    <property type="project" value="UniProtKB-UniRule"/>
</dbReference>
<dbReference type="GO" id="GO:0000028">
    <property type="term" value="P:ribosomal small subunit assembly"/>
    <property type="evidence" value="ECO:0007669"/>
    <property type="project" value="UniProtKB-UniRule"/>
</dbReference>
<dbReference type="GO" id="GO:0006412">
    <property type="term" value="P:translation"/>
    <property type="evidence" value="ECO:0007669"/>
    <property type="project" value="UniProtKB-UniRule"/>
</dbReference>
<dbReference type="CDD" id="cd01425">
    <property type="entry name" value="RPS2"/>
    <property type="match status" value="1"/>
</dbReference>
<dbReference type="FunFam" id="3.40.50.10490:FF:000012">
    <property type="entry name" value="40S ribosomal protein SA"/>
    <property type="match status" value="1"/>
</dbReference>
<dbReference type="Gene3D" id="3.40.50.10490">
    <property type="entry name" value="Glucose-6-phosphate isomerase like protein, domain 1"/>
    <property type="match status" value="1"/>
</dbReference>
<dbReference type="HAMAP" id="MF_03015">
    <property type="entry name" value="Ribosomal_S2_euk"/>
    <property type="match status" value="1"/>
</dbReference>
<dbReference type="InterPro" id="IPR001865">
    <property type="entry name" value="Ribosomal_uS2"/>
</dbReference>
<dbReference type="InterPro" id="IPR018130">
    <property type="entry name" value="Ribosomal_uS2_CS"/>
</dbReference>
<dbReference type="InterPro" id="IPR027498">
    <property type="entry name" value="Ribosomal_uS2_euk"/>
</dbReference>
<dbReference type="InterPro" id="IPR005707">
    <property type="entry name" value="Ribosomal_uS2_euk/arc"/>
</dbReference>
<dbReference type="InterPro" id="IPR023591">
    <property type="entry name" value="Ribosomal_uS2_flav_dom_sf"/>
</dbReference>
<dbReference type="NCBIfam" id="TIGR01012">
    <property type="entry name" value="uS2_euk_arch"/>
    <property type="match status" value="1"/>
</dbReference>
<dbReference type="PANTHER" id="PTHR11489">
    <property type="entry name" value="40S RIBOSOMAL PROTEIN SA"/>
    <property type="match status" value="1"/>
</dbReference>
<dbReference type="Pfam" id="PF00318">
    <property type="entry name" value="Ribosomal_S2"/>
    <property type="match status" value="2"/>
</dbReference>
<dbReference type="PRINTS" id="PR00395">
    <property type="entry name" value="RIBOSOMALS2"/>
</dbReference>
<dbReference type="SUPFAM" id="SSF52313">
    <property type="entry name" value="Ribosomal protein S2"/>
    <property type="match status" value="1"/>
</dbReference>
<dbReference type="PROSITE" id="PS00962">
    <property type="entry name" value="RIBOSOMAL_S2_1"/>
    <property type="match status" value="1"/>
</dbReference>
<dbReference type="PROSITE" id="PS00963">
    <property type="entry name" value="RIBOSOMAL_S2_2"/>
    <property type="match status" value="1"/>
</dbReference>
<protein>
    <recommendedName>
        <fullName evidence="1">Small ribosomal subunit protein uS2</fullName>
    </recommendedName>
    <alternativeName>
        <fullName evidence="2">40S ribosomal protein SA</fullName>
    </alternativeName>
</protein>
<keyword id="KW-0963">Cytoplasm</keyword>
<keyword id="KW-1185">Reference proteome</keyword>
<keyword id="KW-0687">Ribonucleoprotein</keyword>
<keyword id="KW-0689">Ribosomal protein</keyword>
<comment type="function">
    <text evidence="1">Required for the assembly and/or stability of the 40S ribosomal subunit. Required for the processing of the 20S rRNA-precursor to mature 18S rRNA in a late step of the maturation of 40S ribosomal subunits.</text>
</comment>
<comment type="subunit">
    <text evidence="1">Component of the small ribosomal subunit. Mature ribosomes consist of a small (40S) and a large (60S) subunit. The 40S subunit contains about 33 different proteins and 1 molecule of RNA (18S). The 60S subunit contains about 49 different proteins and 3 molecules of RNA (25S, 5.8S and 5S). Interacts with ribosomal protein S21.</text>
</comment>
<comment type="subcellular location">
    <subcellularLocation>
        <location evidence="1">Cytoplasm</location>
    </subcellularLocation>
</comment>
<comment type="similarity">
    <text evidence="1">Belongs to the universal ribosomal protein uS2 family.</text>
</comment>
<gene>
    <name type="ORF">PVX_111380</name>
</gene>
<accession>A5KE24</accession>
<name>RSSA_PLAVS</name>
<organism>
    <name type="scientific">Plasmodium vivax (strain Salvador I)</name>
    <dbReference type="NCBI Taxonomy" id="126793"/>
    <lineage>
        <taxon>Eukaryota</taxon>
        <taxon>Sar</taxon>
        <taxon>Alveolata</taxon>
        <taxon>Apicomplexa</taxon>
        <taxon>Aconoidasida</taxon>
        <taxon>Haemosporida</taxon>
        <taxon>Plasmodiidae</taxon>
        <taxon>Plasmodium</taxon>
        <taxon>Plasmodium (Plasmodium)</taxon>
    </lineage>
</organism>
<feature type="chain" id="PRO_0000371609" description="Small ribosomal subunit protein uS2">
    <location>
        <begin position="1"/>
        <end position="263"/>
    </location>
</feature>